<feature type="chain" id="PRO_0000119151" description="Kelch repeat and BTB domain-containing protein A55">
    <location>
        <begin position="1"/>
        <end position="564"/>
    </location>
</feature>
<feature type="domain" description="BTB" evidence="2">
    <location>
        <begin position="21"/>
        <end position="88"/>
    </location>
</feature>
<feature type="repeat" description="Kelch 1">
    <location>
        <begin position="252"/>
        <end position="297"/>
    </location>
</feature>
<feature type="repeat" description="Kelch 2">
    <location>
        <begin position="298"/>
        <end position="346"/>
    </location>
</feature>
<feature type="repeat" description="Kelch 3">
    <location>
        <begin position="347"/>
        <end position="395"/>
    </location>
</feature>
<feature type="repeat" description="Kelch 4">
    <location>
        <begin position="397"/>
        <end position="441"/>
    </location>
</feature>
<feature type="repeat" description="Kelch 5">
    <location>
        <begin position="442"/>
        <end position="492"/>
    </location>
</feature>
<feature type="repeat" description="Kelch 6">
    <location>
        <begin position="494"/>
        <end position="539"/>
    </location>
</feature>
<feature type="helix" evidence="4">
    <location>
        <begin position="4"/>
        <end position="17"/>
    </location>
</feature>
<feature type="turn" evidence="4">
    <location>
        <begin position="18"/>
        <end position="20"/>
    </location>
</feature>
<feature type="strand" evidence="4">
    <location>
        <begin position="23"/>
        <end position="27"/>
    </location>
</feature>
<feature type="strand" evidence="4">
    <location>
        <begin position="30"/>
        <end position="34"/>
    </location>
</feature>
<feature type="helix" evidence="4">
    <location>
        <begin position="36"/>
        <end position="42"/>
    </location>
</feature>
<feature type="helix" evidence="4">
    <location>
        <begin position="44"/>
        <end position="49"/>
    </location>
</feature>
<feature type="strand" evidence="4">
    <location>
        <begin position="51"/>
        <end position="54"/>
    </location>
</feature>
<feature type="strand" evidence="4">
    <location>
        <begin position="60"/>
        <end position="63"/>
    </location>
</feature>
<feature type="helix" evidence="4">
    <location>
        <begin position="69"/>
        <end position="79"/>
    </location>
</feature>
<feature type="turn" evidence="4">
    <location>
        <begin position="88"/>
        <end position="90"/>
    </location>
</feature>
<feature type="helix" evidence="4">
    <location>
        <begin position="91"/>
        <end position="101"/>
    </location>
</feature>
<feature type="helix" evidence="4">
    <location>
        <begin position="104"/>
        <end position="116"/>
    </location>
</feature>
<feature type="helix" evidence="4">
    <location>
        <begin position="120"/>
        <end position="132"/>
    </location>
</feature>
<feature type="helix" evidence="4">
    <location>
        <begin position="136"/>
        <end position="147"/>
    </location>
</feature>
<feature type="helix" evidence="4">
    <location>
        <begin position="150"/>
        <end position="153"/>
    </location>
</feature>
<feature type="strand" evidence="4">
    <location>
        <begin position="154"/>
        <end position="156"/>
    </location>
</feature>
<feature type="helix" evidence="4">
    <location>
        <begin position="157"/>
        <end position="161"/>
    </location>
</feature>
<feature type="helix" evidence="4">
    <location>
        <begin position="164"/>
        <end position="171"/>
    </location>
</feature>
<feature type="strand" evidence="4">
    <location>
        <begin position="172"/>
        <end position="174"/>
    </location>
</feature>
<feature type="helix" evidence="4">
    <location>
        <begin position="184"/>
        <end position="195"/>
    </location>
</feature>
<name>KBTB1_VACCW</name>
<accession>P24768</accession>
<accession>Q76ZM4</accession>
<evidence type="ECO:0000250" key="1"/>
<evidence type="ECO:0000255" key="2">
    <source>
        <dbReference type="PROSITE-ProRule" id="PRU00037"/>
    </source>
</evidence>
<evidence type="ECO:0000305" key="3"/>
<evidence type="ECO:0007829" key="4">
    <source>
        <dbReference type="PDB" id="6I2M"/>
    </source>
</evidence>
<comment type="function">
    <text>Probable substrate-specific adapter of CUL3-containing E3 ubiquitin-protein ligases which mediate the ubiquitination and subsequent proteasomal degradation of host target proteins.</text>
</comment>
<comment type="subunit">
    <text evidence="1">Interacts (via BTB domain) with host CUL3.</text>
</comment>
<comment type="subcellular location">
    <subcellularLocation>
        <location evidence="1">Host cytoplasm</location>
    </subcellularLocation>
</comment>
<comment type="domain">
    <text evidence="1">The BTB domain is responsible for the interaction with CUL3 while the Kelch repeat domains supposely serve to recruit the cellular substrates.</text>
</comment>
<comment type="similarity">
    <text evidence="3">Belongs to the poxviruses A55 protein family.</text>
</comment>
<keyword id="KW-0002">3D-structure</keyword>
<keyword id="KW-0244">Early protein</keyword>
<keyword id="KW-1035">Host cytoplasm</keyword>
<keyword id="KW-0945">Host-virus interaction</keyword>
<keyword id="KW-0880">Kelch repeat</keyword>
<keyword id="KW-1123">Modulation of host E3 ubiquitin ligases by virus</keyword>
<keyword id="KW-1130">Modulation of host ubiquitin pathway by virus</keyword>
<keyword id="KW-1185">Reference proteome</keyword>
<keyword id="KW-0677">Repeat</keyword>
<keyword id="KW-0833">Ubl conjugation pathway</keyword>
<proteinExistence type="evidence at protein level"/>
<gene>
    <name type="primary">KBTB1</name>
    <name type="ordered locus">VACWR180</name>
    <name type="ORF">A55R</name>
</gene>
<protein>
    <recommendedName>
        <fullName>Kelch repeat and BTB domain-containing protein A55</fullName>
    </recommendedName>
</protein>
<organismHost>
    <name type="scientific">Bos taurus</name>
    <name type="common">Bovine</name>
    <dbReference type="NCBI Taxonomy" id="9913"/>
</organismHost>
<dbReference type="EMBL" id="D11079">
    <property type="protein sequence ID" value="BAA01828.1"/>
    <property type="molecule type" value="Genomic_DNA"/>
</dbReference>
<dbReference type="EMBL" id="M58054">
    <property type="protein sequence ID" value="AAA48340.1"/>
    <property type="molecule type" value="Genomic_DNA"/>
</dbReference>
<dbReference type="EMBL" id="AY243312">
    <property type="protein sequence ID" value="AAO89459.1"/>
    <property type="molecule type" value="Genomic_DNA"/>
</dbReference>
<dbReference type="PIR" id="JQ1792">
    <property type="entry name" value="JQ1792"/>
</dbReference>
<dbReference type="RefSeq" id="YP_233062.1">
    <property type="nucleotide sequence ID" value="NC_006998.1"/>
</dbReference>
<dbReference type="PDB" id="6I2M">
    <property type="method" value="X-ray"/>
    <property type="resolution" value="2.30 A"/>
    <property type="chains" value="A=1-250"/>
</dbReference>
<dbReference type="PDBsum" id="6I2M"/>
<dbReference type="SMR" id="P24768"/>
<dbReference type="BioGRID" id="3509005">
    <property type="interactions" value="2"/>
</dbReference>
<dbReference type="DIP" id="DIP-2655N"/>
<dbReference type="DNASU" id="3707651"/>
<dbReference type="GeneID" id="3707651"/>
<dbReference type="KEGG" id="vg:3707651"/>
<dbReference type="Proteomes" id="UP000000344">
    <property type="component" value="Genome"/>
</dbReference>
<dbReference type="GO" id="GO:0030430">
    <property type="term" value="C:host cell cytoplasm"/>
    <property type="evidence" value="ECO:0000305"/>
    <property type="project" value="UniProt"/>
</dbReference>
<dbReference type="GO" id="GO:1990756">
    <property type="term" value="F:ubiquitin-like ligase-substrate adaptor activity"/>
    <property type="evidence" value="ECO:0000314"/>
    <property type="project" value="UniProt"/>
</dbReference>
<dbReference type="GO" id="GO:0039648">
    <property type="term" value="P:symbiont-mediated perturbation of host ubiquitin-like protein modification"/>
    <property type="evidence" value="ECO:0007669"/>
    <property type="project" value="UniProtKB-KW"/>
</dbReference>
<dbReference type="GO" id="GO:0085034">
    <property type="term" value="P:symbiont-mediated suppression of host NF-kappaB cascade"/>
    <property type="evidence" value="ECO:0000314"/>
    <property type="project" value="UniProt"/>
</dbReference>
<dbReference type="Gene3D" id="1.25.40.420">
    <property type="match status" value="1"/>
</dbReference>
<dbReference type="Gene3D" id="2.120.10.80">
    <property type="entry name" value="Kelch-type beta propeller"/>
    <property type="match status" value="1"/>
</dbReference>
<dbReference type="Gene3D" id="3.30.710.10">
    <property type="entry name" value="Potassium Channel Kv1.1, Chain A"/>
    <property type="match status" value="1"/>
</dbReference>
<dbReference type="InterPro" id="IPR011705">
    <property type="entry name" value="BACK"/>
</dbReference>
<dbReference type="InterPro" id="IPR000210">
    <property type="entry name" value="BTB/POZ_dom"/>
</dbReference>
<dbReference type="InterPro" id="IPR015915">
    <property type="entry name" value="Kelch-typ_b-propeller"/>
</dbReference>
<dbReference type="InterPro" id="IPR006652">
    <property type="entry name" value="Kelch_1"/>
</dbReference>
<dbReference type="InterPro" id="IPR011333">
    <property type="entry name" value="SKP1/BTB/POZ_sf"/>
</dbReference>
<dbReference type="InterPro" id="IPR024182">
    <property type="entry name" value="Vaccinia_A55R"/>
</dbReference>
<dbReference type="PANTHER" id="PTHR45632:SF3">
    <property type="entry name" value="KELCH-LIKE PROTEIN 32"/>
    <property type="match status" value="1"/>
</dbReference>
<dbReference type="PANTHER" id="PTHR45632">
    <property type="entry name" value="LD33804P"/>
    <property type="match status" value="1"/>
</dbReference>
<dbReference type="Pfam" id="PF07707">
    <property type="entry name" value="BACK"/>
    <property type="match status" value="1"/>
</dbReference>
<dbReference type="Pfam" id="PF00651">
    <property type="entry name" value="BTB"/>
    <property type="match status" value="1"/>
</dbReference>
<dbReference type="Pfam" id="PF01344">
    <property type="entry name" value="Kelch_1"/>
    <property type="match status" value="3"/>
</dbReference>
<dbReference type="PIRSF" id="PIRSF003716">
    <property type="entry name" value="VAC_F3L"/>
    <property type="match status" value="1"/>
</dbReference>
<dbReference type="SMART" id="SM00875">
    <property type="entry name" value="BACK"/>
    <property type="match status" value="1"/>
</dbReference>
<dbReference type="SMART" id="SM00225">
    <property type="entry name" value="BTB"/>
    <property type="match status" value="1"/>
</dbReference>
<dbReference type="SMART" id="SM00612">
    <property type="entry name" value="Kelch"/>
    <property type="match status" value="5"/>
</dbReference>
<dbReference type="SUPFAM" id="SSF117281">
    <property type="entry name" value="Kelch motif"/>
    <property type="match status" value="1"/>
</dbReference>
<dbReference type="SUPFAM" id="SSF54695">
    <property type="entry name" value="POZ domain"/>
    <property type="match status" value="1"/>
</dbReference>
<dbReference type="PROSITE" id="PS50097">
    <property type="entry name" value="BTB"/>
    <property type="match status" value="1"/>
</dbReference>
<organism>
    <name type="scientific">Vaccinia virus (strain Western Reserve)</name>
    <name type="common">VACV</name>
    <name type="synonym">Vaccinia virus (strain WR)</name>
    <dbReference type="NCBI Taxonomy" id="10254"/>
    <lineage>
        <taxon>Viruses</taxon>
        <taxon>Varidnaviria</taxon>
        <taxon>Bamfordvirae</taxon>
        <taxon>Nucleocytoviricota</taxon>
        <taxon>Pokkesviricetes</taxon>
        <taxon>Chitovirales</taxon>
        <taxon>Poxviridae</taxon>
        <taxon>Chordopoxvirinae</taxon>
        <taxon>Orthopoxvirus</taxon>
        <taxon>Vaccinia virus</taxon>
    </lineage>
</organism>
<sequence>MNNSSELIAVINGFRNSGRFCDISIVINDERINAHKLILSGASEYFSILFSNNFIDSNEYEVNLSHLDYQSVNDLIDYIYGIPLSLTNDNVKYILSTADFLQIGSAITECENYILKNLCSKNCIDFYIYADKYNNKKIESASFNTILQNILRLINDENFKYLTEESMIKILSDDMLNIKNEDFAPLILIKWLESTQQSCTVELLRCLRISLLSPQVIKSLYSHQLVSSIYECITFLNNIAFLDESFPRYHSIELISIGISNSHDKISINCYNHKKNTWEMISSRRYRCSFAVAVLDNIIYMMGGYDQSPYRSSKVIAYNTCTNSWIYDIPELKYPRSNCGGLADDEYIYCIGGIRDQDSSLTSSIDKWKPSKPYWQKYAKMREPKCDMGVAMLNGLIYVMGGIVKGDTCTDALESLSEDGWMKHQRLPIKMSNMSTIVHDGKIYISGGYNNSSVVNVISNLVLSYNPIYDEWTKLSSLNIPRINPALWSAHNKLYVGGGISDDVRTNTSETYDKEKDCWTLDNGHVLPRNYIMYKCEPIKHKYPLEKTQYTNDFLKYLESFIGS</sequence>
<reference key="1">
    <citation type="journal article" date="1991" name="J. Gen. Virol.">
        <title>Nucleotide sequence of 42 kbp of vaccinia virus strain WR from near the right inverted terminal repeat.</title>
        <authorList>
            <person name="Smith G.L."/>
            <person name="Chan Y.S."/>
            <person name="Howard S.T."/>
        </authorList>
    </citation>
    <scope>NUCLEOTIDE SEQUENCE [GENOMIC DNA]</scope>
</reference>
<reference key="2">
    <citation type="journal article" date="1991" name="Virology">
        <title>Vaccinia virus homologues of the Shope fibroma virus inverted terminal repeat proteins and a discontinuous ORF related to the tumor necrosis factor receptor family.</title>
        <authorList>
            <person name="Howard S.T."/>
            <person name="Chan Y.S."/>
            <person name="Smith G.L."/>
        </authorList>
    </citation>
    <scope>NUCLEOTIDE SEQUENCE [GENOMIC DNA]</scope>
</reference>
<reference key="3">
    <citation type="submission" date="2003-02" db="EMBL/GenBank/DDBJ databases">
        <title>Sequencing of the coding region of Vaccinia-WR to an average 9-fold redundancy and an error rate of 0.16/10kb.</title>
        <authorList>
            <person name="Esposito J.J."/>
            <person name="Frace A.M."/>
            <person name="Sammons S.A."/>
            <person name="Olsen-Rasmussen M."/>
            <person name="Osborne J."/>
            <person name="Wohlhueter R."/>
        </authorList>
    </citation>
    <scope>NUCLEOTIDE SEQUENCE [LARGE SCALE GENOMIC DNA]</scope>
</reference>